<evidence type="ECO:0000255" key="1">
    <source>
        <dbReference type="HAMAP-Rule" id="MF_00151"/>
    </source>
</evidence>
<proteinExistence type="inferred from homology"/>
<keyword id="KW-0067">ATP-binding</keyword>
<keyword id="KW-0173">Coenzyme A biosynthesis</keyword>
<keyword id="KW-0963">Cytoplasm</keyword>
<keyword id="KW-0460">Magnesium</keyword>
<keyword id="KW-0547">Nucleotide-binding</keyword>
<keyword id="KW-0548">Nucleotidyltransferase</keyword>
<keyword id="KW-0808">Transferase</keyword>
<protein>
    <recommendedName>
        <fullName evidence="1">Phosphopantetheine adenylyltransferase</fullName>
        <ecNumber evidence="1">2.7.7.3</ecNumber>
    </recommendedName>
    <alternativeName>
        <fullName evidence="1">Dephospho-CoA pyrophosphorylase</fullName>
    </alternativeName>
    <alternativeName>
        <fullName evidence="1">Pantetheine-phosphate adenylyltransferase</fullName>
        <shortName evidence="1">PPAT</shortName>
    </alternativeName>
</protein>
<accession>B7J0E9</accession>
<sequence length="163" mass="19016">MRVAVFPGSFDPITWGHIDLIKRSLAIFDKVIVLVAKNKSKKYFLSDIERFSLTKDVISSLNFSNVLVDRYSGFIVDYALINSIKFIVRGIRAFNDFDIEFERYLVNNKLNFEIDTIFLPSSAEHLYVRSDFVKELMLKKDVDLSNFVPELVFNRLKSKFIDK</sequence>
<organism>
    <name type="scientific">Borreliella burgdorferi (strain ZS7)</name>
    <name type="common">Borrelia burgdorferi</name>
    <dbReference type="NCBI Taxonomy" id="445985"/>
    <lineage>
        <taxon>Bacteria</taxon>
        <taxon>Pseudomonadati</taxon>
        <taxon>Spirochaetota</taxon>
        <taxon>Spirochaetia</taxon>
        <taxon>Spirochaetales</taxon>
        <taxon>Borreliaceae</taxon>
        <taxon>Borreliella</taxon>
    </lineage>
</organism>
<name>COAD_BORBZ</name>
<reference key="1">
    <citation type="journal article" date="2011" name="J. Bacteriol.">
        <title>Whole-genome sequences of thirteen isolates of Borrelia burgdorferi.</title>
        <authorList>
            <person name="Schutzer S.E."/>
            <person name="Fraser-Liggett C.M."/>
            <person name="Casjens S.R."/>
            <person name="Qiu W.G."/>
            <person name="Dunn J.J."/>
            <person name="Mongodin E.F."/>
            <person name="Luft B.J."/>
        </authorList>
    </citation>
    <scope>NUCLEOTIDE SEQUENCE [LARGE SCALE GENOMIC DNA]</scope>
    <source>
        <strain>ZS7</strain>
    </source>
</reference>
<feature type="chain" id="PRO_1000118070" description="Phosphopantetheine adenylyltransferase">
    <location>
        <begin position="1"/>
        <end position="163"/>
    </location>
</feature>
<feature type="binding site" evidence="1">
    <location>
        <begin position="9"/>
        <end position="10"/>
    </location>
    <ligand>
        <name>ATP</name>
        <dbReference type="ChEBI" id="CHEBI:30616"/>
    </ligand>
</feature>
<feature type="binding site" evidence="1">
    <location>
        <position position="9"/>
    </location>
    <ligand>
        <name>substrate</name>
    </ligand>
</feature>
<feature type="binding site" evidence="1">
    <location>
        <position position="17"/>
    </location>
    <ligand>
        <name>ATP</name>
        <dbReference type="ChEBI" id="CHEBI:30616"/>
    </ligand>
</feature>
<feature type="binding site" evidence="1">
    <location>
        <position position="41"/>
    </location>
    <ligand>
        <name>substrate</name>
    </ligand>
</feature>
<feature type="binding site" evidence="1">
    <location>
        <position position="75"/>
    </location>
    <ligand>
        <name>substrate</name>
    </ligand>
</feature>
<feature type="binding site" evidence="1">
    <location>
        <position position="89"/>
    </location>
    <ligand>
        <name>substrate</name>
    </ligand>
</feature>
<feature type="binding site" evidence="1">
    <location>
        <begin position="90"/>
        <end position="92"/>
    </location>
    <ligand>
        <name>ATP</name>
        <dbReference type="ChEBI" id="CHEBI:30616"/>
    </ligand>
</feature>
<feature type="binding site" evidence="1">
    <location>
        <position position="100"/>
    </location>
    <ligand>
        <name>ATP</name>
        <dbReference type="ChEBI" id="CHEBI:30616"/>
    </ligand>
</feature>
<feature type="binding site" evidence="1">
    <location>
        <begin position="125"/>
        <end position="131"/>
    </location>
    <ligand>
        <name>ATP</name>
        <dbReference type="ChEBI" id="CHEBI:30616"/>
    </ligand>
</feature>
<feature type="site" description="Transition state stabilizer" evidence="1">
    <location>
        <position position="17"/>
    </location>
</feature>
<comment type="function">
    <text evidence="1">Reversibly transfers an adenylyl group from ATP to 4'-phosphopantetheine, yielding dephospho-CoA (dPCoA) and pyrophosphate.</text>
</comment>
<comment type="catalytic activity">
    <reaction evidence="1">
        <text>(R)-4'-phosphopantetheine + ATP + H(+) = 3'-dephospho-CoA + diphosphate</text>
        <dbReference type="Rhea" id="RHEA:19801"/>
        <dbReference type="ChEBI" id="CHEBI:15378"/>
        <dbReference type="ChEBI" id="CHEBI:30616"/>
        <dbReference type="ChEBI" id="CHEBI:33019"/>
        <dbReference type="ChEBI" id="CHEBI:57328"/>
        <dbReference type="ChEBI" id="CHEBI:61723"/>
        <dbReference type="EC" id="2.7.7.3"/>
    </reaction>
</comment>
<comment type="cofactor">
    <cofactor evidence="1">
        <name>Mg(2+)</name>
        <dbReference type="ChEBI" id="CHEBI:18420"/>
    </cofactor>
</comment>
<comment type="pathway">
    <text evidence="1">Cofactor biosynthesis; coenzyme A biosynthesis; CoA from (R)-pantothenate: step 4/5.</text>
</comment>
<comment type="subunit">
    <text evidence="1">Homohexamer.</text>
</comment>
<comment type="subcellular location">
    <subcellularLocation>
        <location evidence="1">Cytoplasm</location>
    </subcellularLocation>
</comment>
<comment type="similarity">
    <text evidence="1">Belongs to the bacterial CoaD family.</text>
</comment>
<dbReference type="EC" id="2.7.7.3" evidence="1"/>
<dbReference type="EMBL" id="CP001205">
    <property type="protein sequence ID" value="ACK74920.1"/>
    <property type="molecule type" value="Genomic_DNA"/>
</dbReference>
<dbReference type="RefSeq" id="WP_002656002.1">
    <property type="nucleotide sequence ID" value="NC_011728.1"/>
</dbReference>
<dbReference type="SMR" id="B7J0E9"/>
<dbReference type="GeneID" id="56567511"/>
<dbReference type="KEGG" id="bbz:BbuZS7_0723"/>
<dbReference type="HOGENOM" id="CLU_100149_1_1_12"/>
<dbReference type="UniPathway" id="UPA00241">
    <property type="reaction ID" value="UER00355"/>
</dbReference>
<dbReference type="Proteomes" id="UP000006901">
    <property type="component" value="Chromosome"/>
</dbReference>
<dbReference type="GO" id="GO:0005737">
    <property type="term" value="C:cytoplasm"/>
    <property type="evidence" value="ECO:0007669"/>
    <property type="project" value="UniProtKB-SubCell"/>
</dbReference>
<dbReference type="GO" id="GO:0005524">
    <property type="term" value="F:ATP binding"/>
    <property type="evidence" value="ECO:0007669"/>
    <property type="project" value="UniProtKB-KW"/>
</dbReference>
<dbReference type="GO" id="GO:0004595">
    <property type="term" value="F:pantetheine-phosphate adenylyltransferase activity"/>
    <property type="evidence" value="ECO:0007669"/>
    <property type="project" value="UniProtKB-UniRule"/>
</dbReference>
<dbReference type="GO" id="GO:0015937">
    <property type="term" value="P:coenzyme A biosynthetic process"/>
    <property type="evidence" value="ECO:0007669"/>
    <property type="project" value="UniProtKB-UniRule"/>
</dbReference>
<dbReference type="Gene3D" id="3.40.50.620">
    <property type="entry name" value="HUPs"/>
    <property type="match status" value="1"/>
</dbReference>
<dbReference type="HAMAP" id="MF_00151">
    <property type="entry name" value="PPAT_bact"/>
    <property type="match status" value="1"/>
</dbReference>
<dbReference type="InterPro" id="IPR004821">
    <property type="entry name" value="Cyt_trans-like"/>
</dbReference>
<dbReference type="InterPro" id="IPR001980">
    <property type="entry name" value="PPAT"/>
</dbReference>
<dbReference type="InterPro" id="IPR014729">
    <property type="entry name" value="Rossmann-like_a/b/a_fold"/>
</dbReference>
<dbReference type="NCBIfam" id="TIGR01510">
    <property type="entry name" value="coaD_prev_kdtB"/>
    <property type="match status" value="1"/>
</dbReference>
<dbReference type="NCBIfam" id="TIGR00125">
    <property type="entry name" value="cyt_tran_rel"/>
    <property type="match status" value="1"/>
</dbReference>
<dbReference type="PANTHER" id="PTHR21342">
    <property type="entry name" value="PHOSPHOPANTETHEINE ADENYLYLTRANSFERASE"/>
    <property type="match status" value="1"/>
</dbReference>
<dbReference type="PANTHER" id="PTHR21342:SF1">
    <property type="entry name" value="PHOSPHOPANTETHEINE ADENYLYLTRANSFERASE"/>
    <property type="match status" value="1"/>
</dbReference>
<dbReference type="Pfam" id="PF01467">
    <property type="entry name" value="CTP_transf_like"/>
    <property type="match status" value="1"/>
</dbReference>
<dbReference type="PRINTS" id="PR01020">
    <property type="entry name" value="LPSBIOSNTHSS"/>
</dbReference>
<dbReference type="SUPFAM" id="SSF52374">
    <property type="entry name" value="Nucleotidylyl transferase"/>
    <property type="match status" value="1"/>
</dbReference>
<gene>
    <name evidence="1" type="primary">coaD</name>
    <name type="ordered locus">BbuZS7_0723</name>
</gene>